<evidence type="ECO:0000255" key="1">
    <source>
        <dbReference type="HAMAP-Rule" id="MF_00402"/>
    </source>
</evidence>
<evidence type="ECO:0000305" key="2"/>
<reference key="1">
    <citation type="submission" date="2006-12" db="EMBL/GenBank/DDBJ databases">
        <title>Bifidobacterium adolescentis complete genome sequence.</title>
        <authorList>
            <person name="Suzuki T."/>
            <person name="Tsuda Y."/>
            <person name="Kanou N."/>
            <person name="Inoue T."/>
            <person name="Kumazaki K."/>
            <person name="Nagano S."/>
            <person name="Hirai S."/>
            <person name="Tanaka K."/>
            <person name="Watanabe K."/>
        </authorList>
    </citation>
    <scope>NUCLEOTIDE SEQUENCE [LARGE SCALE GENOMIC DNA]</scope>
    <source>
        <strain>ATCC 15703 / DSM 20083 / NCTC 11814 / E194a</strain>
    </source>
</reference>
<gene>
    <name evidence="1" type="primary">rplS</name>
    <name type="ordered locus">BAD_0232</name>
</gene>
<proteinExistence type="inferred from homology"/>
<organism>
    <name type="scientific">Bifidobacterium adolescentis (strain ATCC 15703 / DSM 20083 / NCTC 11814 / E194a)</name>
    <dbReference type="NCBI Taxonomy" id="367928"/>
    <lineage>
        <taxon>Bacteria</taxon>
        <taxon>Bacillati</taxon>
        <taxon>Actinomycetota</taxon>
        <taxon>Actinomycetes</taxon>
        <taxon>Bifidobacteriales</taxon>
        <taxon>Bifidobacteriaceae</taxon>
        <taxon>Bifidobacterium</taxon>
    </lineage>
</organism>
<name>RL19_BIFAA</name>
<keyword id="KW-1185">Reference proteome</keyword>
<keyword id="KW-0687">Ribonucleoprotein</keyword>
<keyword id="KW-0689">Ribosomal protein</keyword>
<comment type="function">
    <text evidence="1">This protein is located at the 30S-50S ribosomal subunit interface and may play a role in the structure and function of the aminoacyl-tRNA binding site.</text>
</comment>
<comment type="similarity">
    <text evidence="1">Belongs to the bacterial ribosomal protein bL19 family.</text>
</comment>
<comment type="sequence caution" evidence="2">
    <conflict type="erroneous initiation">
        <sequence resource="EMBL-CDS" id="BAF39013"/>
    </conflict>
</comment>
<feature type="chain" id="PRO_0000340736" description="Large ribosomal subunit protein bL19">
    <location>
        <begin position="1"/>
        <end position="121"/>
    </location>
</feature>
<sequence length="121" mass="13645">MVNAIEAFDAKHMKPAEEIPAFRPGDTVEVNVKIKEGNNSRIQAFTGVVIARQGGGVRETFVVRKISFGTGVERRFPLHSPAIDSIKVVRKGRVRRAKLYYLRNLRGKAARIVERRDNSEK</sequence>
<accession>A0ZZY0</accession>
<dbReference type="EMBL" id="AP009256">
    <property type="protein sequence ID" value="BAF39013.1"/>
    <property type="status" value="ALT_INIT"/>
    <property type="molecule type" value="Genomic_DNA"/>
</dbReference>
<dbReference type="RefSeq" id="WP_021912811.1">
    <property type="nucleotide sequence ID" value="NZ_CAXSQS010000001.1"/>
</dbReference>
<dbReference type="SMR" id="A0ZZY0"/>
<dbReference type="STRING" id="367928.BAD_0232"/>
<dbReference type="PaxDb" id="1680-BADO_0241"/>
<dbReference type="GeneID" id="4557601"/>
<dbReference type="KEGG" id="bad:BAD_0232"/>
<dbReference type="HOGENOM" id="CLU_103507_2_1_11"/>
<dbReference type="Proteomes" id="UP000008702">
    <property type="component" value="Chromosome"/>
</dbReference>
<dbReference type="GO" id="GO:0022625">
    <property type="term" value="C:cytosolic large ribosomal subunit"/>
    <property type="evidence" value="ECO:0007669"/>
    <property type="project" value="TreeGrafter"/>
</dbReference>
<dbReference type="GO" id="GO:0003735">
    <property type="term" value="F:structural constituent of ribosome"/>
    <property type="evidence" value="ECO:0007669"/>
    <property type="project" value="InterPro"/>
</dbReference>
<dbReference type="GO" id="GO:0006412">
    <property type="term" value="P:translation"/>
    <property type="evidence" value="ECO:0007669"/>
    <property type="project" value="UniProtKB-UniRule"/>
</dbReference>
<dbReference type="FunFam" id="2.30.30.790:FF:000001">
    <property type="entry name" value="50S ribosomal protein L19"/>
    <property type="match status" value="1"/>
</dbReference>
<dbReference type="Gene3D" id="2.30.30.790">
    <property type="match status" value="1"/>
</dbReference>
<dbReference type="HAMAP" id="MF_00402">
    <property type="entry name" value="Ribosomal_bL19"/>
    <property type="match status" value="1"/>
</dbReference>
<dbReference type="InterPro" id="IPR001857">
    <property type="entry name" value="Ribosomal_bL19"/>
</dbReference>
<dbReference type="InterPro" id="IPR018257">
    <property type="entry name" value="Ribosomal_bL19_CS"/>
</dbReference>
<dbReference type="InterPro" id="IPR038657">
    <property type="entry name" value="Ribosomal_bL19_sf"/>
</dbReference>
<dbReference type="InterPro" id="IPR008991">
    <property type="entry name" value="Translation_prot_SH3-like_sf"/>
</dbReference>
<dbReference type="NCBIfam" id="TIGR01024">
    <property type="entry name" value="rplS_bact"/>
    <property type="match status" value="1"/>
</dbReference>
<dbReference type="PANTHER" id="PTHR15680:SF9">
    <property type="entry name" value="LARGE RIBOSOMAL SUBUNIT PROTEIN BL19M"/>
    <property type="match status" value="1"/>
</dbReference>
<dbReference type="PANTHER" id="PTHR15680">
    <property type="entry name" value="RIBOSOMAL PROTEIN L19"/>
    <property type="match status" value="1"/>
</dbReference>
<dbReference type="Pfam" id="PF01245">
    <property type="entry name" value="Ribosomal_L19"/>
    <property type="match status" value="1"/>
</dbReference>
<dbReference type="PIRSF" id="PIRSF002191">
    <property type="entry name" value="Ribosomal_L19"/>
    <property type="match status" value="1"/>
</dbReference>
<dbReference type="PRINTS" id="PR00061">
    <property type="entry name" value="RIBOSOMALL19"/>
</dbReference>
<dbReference type="SUPFAM" id="SSF50104">
    <property type="entry name" value="Translation proteins SH3-like domain"/>
    <property type="match status" value="1"/>
</dbReference>
<dbReference type="PROSITE" id="PS01015">
    <property type="entry name" value="RIBOSOMAL_L19"/>
    <property type="match status" value="1"/>
</dbReference>
<protein>
    <recommendedName>
        <fullName evidence="1">Large ribosomal subunit protein bL19</fullName>
    </recommendedName>
    <alternativeName>
        <fullName evidence="2">50S ribosomal protein L19</fullName>
    </alternativeName>
</protein>